<sequence length="85" mass="9395">MPKLEMMLLVLLILPLCYIDAVGPPPPWNMEDEIIEHWQKLHCHEISDLTPWILCSPEPLCGGKGCCAQEVCDCSGTACTCPPCL</sequence>
<comment type="function">
    <text evidence="3">Probable neurotoxin.</text>
</comment>
<comment type="subcellular location">
    <subcellularLocation>
        <location evidence="4">Secreted</location>
    </subcellularLocation>
</comment>
<comment type="tissue specificity">
    <text evidence="4">Expressed by the venom duct.</text>
</comment>
<comment type="domain">
    <text evidence="3">The cysteine framework is XXVIII (C-C-C-CC-C-C-C-C-C).</text>
</comment>
<comment type="PTM">
    <text evidence="3">Contains 5 disulfide bonds.</text>
</comment>
<comment type="similarity">
    <text evidence="3">Belongs to the conotoxin D superfamily.</text>
</comment>
<reference key="1">
    <citation type="journal article" date="2017" name="Peptides">
        <title>Cloning, expression and functional characterization of a D-superfamily conotoxin Lt28.1 with previously undescribed cysteine pattern.</title>
        <authorList>
            <person name="Lu J."/>
            <person name="Zhang K."/>
            <person name="Wang S."/>
            <person name="Sun T."/>
            <person name="Yu S."/>
            <person name="Dai Q."/>
            <person name="Liu Z."/>
        </authorList>
    </citation>
    <scope>NUCLEOTIDE SEQUENCE [MRNA]</scope>
    <source>
        <tissue>Venom duct</tissue>
    </source>
</reference>
<keyword id="KW-1015">Disulfide bond</keyword>
<keyword id="KW-0528">Neurotoxin</keyword>
<keyword id="KW-0964">Secreted</keyword>
<keyword id="KW-0732">Signal</keyword>
<keyword id="KW-0800">Toxin</keyword>
<organism>
    <name type="scientific">Conus litteratus</name>
    <name type="common">Lettered cone</name>
    <dbReference type="NCBI Taxonomy" id="89445"/>
    <lineage>
        <taxon>Eukaryota</taxon>
        <taxon>Metazoa</taxon>
        <taxon>Spiralia</taxon>
        <taxon>Lophotrochozoa</taxon>
        <taxon>Mollusca</taxon>
        <taxon>Gastropoda</taxon>
        <taxon>Caenogastropoda</taxon>
        <taxon>Neogastropoda</taxon>
        <taxon>Conoidea</taxon>
        <taxon>Conidae</taxon>
        <taxon>Conus</taxon>
        <taxon>Elisaconus</taxon>
    </lineage>
</organism>
<accession>F6JWV0</accession>
<proteinExistence type="inferred from homology"/>
<feature type="signal peptide" evidence="1">
    <location>
        <begin position="1"/>
        <end position="21"/>
    </location>
</feature>
<feature type="propeptide" id="PRO_0000451014" evidence="4">
    <location>
        <begin position="22"/>
        <end position="40"/>
    </location>
</feature>
<feature type="chain" id="PRO_5003337630" description="Conotoxin Lt28.4" evidence="4">
    <location>
        <begin position="41"/>
        <end position="85"/>
    </location>
</feature>
<evidence type="ECO:0000255" key="1"/>
<evidence type="ECO:0000303" key="2">
    <source>
    </source>
</evidence>
<evidence type="ECO:0000305" key="3"/>
<evidence type="ECO:0000305" key="4">
    <source>
    </source>
</evidence>
<evidence type="ECO:0000312" key="5">
    <source>
        <dbReference type="EMBL" id="ADZ76487.1"/>
    </source>
</evidence>
<protein>
    <recommendedName>
        <fullName evidence="2">Conotoxin Lt28.4</fullName>
    </recommendedName>
    <alternativeName>
        <fullName evidence="5">Conotoxin Lt15.9</fullName>
    </alternativeName>
</protein>
<name>CDS4_CONLT</name>
<dbReference type="EMBL" id="HM003929">
    <property type="protein sequence ID" value="ADZ76487.1"/>
    <property type="molecule type" value="mRNA"/>
</dbReference>
<dbReference type="GO" id="GO:0005576">
    <property type="term" value="C:extracellular region"/>
    <property type="evidence" value="ECO:0007669"/>
    <property type="project" value="UniProtKB-SubCell"/>
</dbReference>
<dbReference type="GO" id="GO:0090729">
    <property type="term" value="F:toxin activity"/>
    <property type="evidence" value="ECO:0007669"/>
    <property type="project" value="UniProtKB-KW"/>
</dbReference>